<proteinExistence type="inferred from homology"/>
<keyword id="KW-0450">Lipoyl</keyword>
<comment type="function">
    <text evidence="2">The glycine cleavage system catalyzes the degradation of glycine. The H protein shuttles the methylamine group of glycine from the P protein to the T protein.</text>
</comment>
<comment type="cofactor">
    <cofactor evidence="2">
        <name>(R)-lipoate</name>
        <dbReference type="ChEBI" id="CHEBI:83088"/>
    </cofactor>
    <text evidence="2">Binds 1 lipoyl cofactor covalently.</text>
</comment>
<comment type="subunit">
    <text evidence="2">The glycine cleavage system is composed of four proteins: P, T, L and H.</text>
</comment>
<comment type="similarity">
    <text evidence="2">Belongs to the GcvH family.</text>
</comment>
<comment type="sequence caution" evidence="4">
    <conflict type="erroneous initiation">
        <sequence resource="EMBL-CDS" id="AAO70524"/>
    </conflict>
</comment>
<comment type="sequence caution" evidence="4">
    <conflict type="erroneous initiation">
        <sequence resource="EMBL-CDS" id="CAD02884"/>
    </conflict>
</comment>
<gene>
    <name evidence="2" type="primary">gcvH</name>
    <name type="ordered locus">STY3210</name>
    <name type="ordered locus">t2972</name>
</gene>
<evidence type="ECO:0000250" key="1"/>
<evidence type="ECO:0000255" key="2">
    <source>
        <dbReference type="HAMAP-Rule" id="MF_00272"/>
    </source>
</evidence>
<evidence type="ECO:0000255" key="3">
    <source>
        <dbReference type="PROSITE-ProRule" id="PRU01066"/>
    </source>
</evidence>
<evidence type="ECO:0000305" key="4"/>
<reference key="1">
    <citation type="journal article" date="2001" name="Nature">
        <title>Complete genome sequence of a multiple drug resistant Salmonella enterica serovar Typhi CT18.</title>
        <authorList>
            <person name="Parkhill J."/>
            <person name="Dougan G."/>
            <person name="James K.D."/>
            <person name="Thomson N.R."/>
            <person name="Pickard D."/>
            <person name="Wain J."/>
            <person name="Churcher C.M."/>
            <person name="Mungall K.L."/>
            <person name="Bentley S.D."/>
            <person name="Holden M.T.G."/>
            <person name="Sebaihia M."/>
            <person name="Baker S."/>
            <person name="Basham D."/>
            <person name="Brooks K."/>
            <person name="Chillingworth T."/>
            <person name="Connerton P."/>
            <person name="Cronin A."/>
            <person name="Davis P."/>
            <person name="Davies R.M."/>
            <person name="Dowd L."/>
            <person name="White N."/>
            <person name="Farrar J."/>
            <person name="Feltwell T."/>
            <person name="Hamlin N."/>
            <person name="Haque A."/>
            <person name="Hien T.T."/>
            <person name="Holroyd S."/>
            <person name="Jagels K."/>
            <person name="Krogh A."/>
            <person name="Larsen T.S."/>
            <person name="Leather S."/>
            <person name="Moule S."/>
            <person name="O'Gaora P."/>
            <person name="Parry C."/>
            <person name="Quail M.A."/>
            <person name="Rutherford K.M."/>
            <person name="Simmonds M."/>
            <person name="Skelton J."/>
            <person name="Stevens K."/>
            <person name="Whitehead S."/>
            <person name="Barrell B.G."/>
        </authorList>
    </citation>
    <scope>NUCLEOTIDE SEQUENCE [LARGE SCALE GENOMIC DNA]</scope>
    <source>
        <strain>CT18</strain>
    </source>
</reference>
<reference key="2">
    <citation type="journal article" date="2003" name="J. Bacteriol.">
        <title>Comparative genomics of Salmonella enterica serovar Typhi strains Ty2 and CT18.</title>
        <authorList>
            <person name="Deng W."/>
            <person name="Liou S.-R."/>
            <person name="Plunkett G. III"/>
            <person name="Mayhew G.F."/>
            <person name="Rose D.J."/>
            <person name="Burland V."/>
            <person name="Kodoyianni V."/>
            <person name="Schwartz D.C."/>
            <person name="Blattner F.R."/>
        </authorList>
    </citation>
    <scope>NUCLEOTIDE SEQUENCE [LARGE SCALE GENOMIC DNA]</scope>
    <source>
        <strain>ATCC 700931 / Ty2</strain>
    </source>
</reference>
<dbReference type="EMBL" id="AL513382">
    <property type="protein sequence ID" value="CAD02884.1"/>
    <property type="status" value="ALT_INIT"/>
    <property type="molecule type" value="Genomic_DNA"/>
</dbReference>
<dbReference type="EMBL" id="AE014613">
    <property type="protein sequence ID" value="AAO70524.1"/>
    <property type="status" value="ALT_INIT"/>
    <property type="molecule type" value="Genomic_DNA"/>
</dbReference>
<dbReference type="PIR" id="AD0873">
    <property type="entry name" value="AD0873"/>
</dbReference>
<dbReference type="RefSeq" id="NP_457452.1">
    <property type="nucleotide sequence ID" value="NC_003198.1"/>
</dbReference>
<dbReference type="RefSeq" id="WP_001295377.1">
    <property type="nucleotide sequence ID" value="NZ_WSUR01000024.1"/>
</dbReference>
<dbReference type="SMR" id="P0A6U1"/>
<dbReference type="STRING" id="220341.gene:17587085"/>
<dbReference type="GeneID" id="93779098"/>
<dbReference type="KEGG" id="stt:t2972"/>
<dbReference type="KEGG" id="sty:STY3210"/>
<dbReference type="PATRIC" id="fig|220341.7.peg.3269"/>
<dbReference type="eggNOG" id="COG0509">
    <property type="taxonomic scope" value="Bacteria"/>
</dbReference>
<dbReference type="HOGENOM" id="CLU_097408_2_1_6"/>
<dbReference type="OMA" id="KEHEWIR"/>
<dbReference type="OrthoDB" id="9796712at2"/>
<dbReference type="Proteomes" id="UP000000541">
    <property type="component" value="Chromosome"/>
</dbReference>
<dbReference type="Proteomes" id="UP000002670">
    <property type="component" value="Chromosome"/>
</dbReference>
<dbReference type="GO" id="GO:0005829">
    <property type="term" value="C:cytosol"/>
    <property type="evidence" value="ECO:0007669"/>
    <property type="project" value="TreeGrafter"/>
</dbReference>
<dbReference type="GO" id="GO:0005960">
    <property type="term" value="C:glycine cleavage complex"/>
    <property type="evidence" value="ECO:0007669"/>
    <property type="project" value="InterPro"/>
</dbReference>
<dbReference type="GO" id="GO:0019464">
    <property type="term" value="P:glycine decarboxylation via glycine cleavage system"/>
    <property type="evidence" value="ECO:0007669"/>
    <property type="project" value="UniProtKB-UniRule"/>
</dbReference>
<dbReference type="CDD" id="cd06848">
    <property type="entry name" value="GCS_H"/>
    <property type="match status" value="1"/>
</dbReference>
<dbReference type="FunFam" id="2.40.50.100:FF:000011">
    <property type="entry name" value="Glycine cleavage system H protein"/>
    <property type="match status" value="1"/>
</dbReference>
<dbReference type="Gene3D" id="2.40.50.100">
    <property type="match status" value="1"/>
</dbReference>
<dbReference type="HAMAP" id="MF_00272">
    <property type="entry name" value="GcvH"/>
    <property type="match status" value="1"/>
</dbReference>
<dbReference type="InterPro" id="IPR003016">
    <property type="entry name" value="2-oxoA_DH_lipoyl-BS"/>
</dbReference>
<dbReference type="InterPro" id="IPR000089">
    <property type="entry name" value="Biotin_lipoyl"/>
</dbReference>
<dbReference type="InterPro" id="IPR002930">
    <property type="entry name" value="GCV_H"/>
</dbReference>
<dbReference type="InterPro" id="IPR033753">
    <property type="entry name" value="GCV_H/Fam206"/>
</dbReference>
<dbReference type="InterPro" id="IPR017453">
    <property type="entry name" value="GCV_H_sub"/>
</dbReference>
<dbReference type="InterPro" id="IPR011053">
    <property type="entry name" value="Single_hybrid_motif"/>
</dbReference>
<dbReference type="NCBIfam" id="TIGR00527">
    <property type="entry name" value="gcvH"/>
    <property type="match status" value="1"/>
</dbReference>
<dbReference type="NCBIfam" id="NF002270">
    <property type="entry name" value="PRK01202.1"/>
    <property type="match status" value="1"/>
</dbReference>
<dbReference type="PANTHER" id="PTHR11715">
    <property type="entry name" value="GLYCINE CLEAVAGE SYSTEM H PROTEIN"/>
    <property type="match status" value="1"/>
</dbReference>
<dbReference type="PANTHER" id="PTHR11715:SF3">
    <property type="entry name" value="GLYCINE CLEAVAGE SYSTEM H PROTEIN-RELATED"/>
    <property type="match status" value="1"/>
</dbReference>
<dbReference type="Pfam" id="PF01597">
    <property type="entry name" value="GCV_H"/>
    <property type="match status" value="1"/>
</dbReference>
<dbReference type="SUPFAM" id="SSF51230">
    <property type="entry name" value="Single hybrid motif"/>
    <property type="match status" value="1"/>
</dbReference>
<dbReference type="PROSITE" id="PS50968">
    <property type="entry name" value="BIOTINYL_LIPOYL"/>
    <property type="match status" value="1"/>
</dbReference>
<dbReference type="PROSITE" id="PS00189">
    <property type="entry name" value="LIPOYL"/>
    <property type="match status" value="1"/>
</dbReference>
<protein>
    <recommendedName>
        <fullName evidence="2">Glycine cleavage system H protein</fullName>
    </recommendedName>
</protein>
<accession>P0A6U1</accession>
<accession>P23884</accession>
<accession>Q8Z3W9</accession>
<feature type="initiator methionine" description="Removed" evidence="1">
    <location>
        <position position="1"/>
    </location>
</feature>
<feature type="chain" id="PRO_0000166242" description="Glycine cleavage system H protein">
    <location>
        <begin position="2"/>
        <end position="129"/>
    </location>
</feature>
<feature type="domain" description="Lipoyl-binding" evidence="3">
    <location>
        <begin position="24"/>
        <end position="106"/>
    </location>
</feature>
<feature type="modified residue" description="N6-lipoyllysine" evidence="2">
    <location>
        <position position="65"/>
    </location>
</feature>
<name>GCSH_SALTI</name>
<sequence>MSNVPAELKYSKEHEWLRKEADGTYTVGITEHAQELLGDMVFVDLPEVGATVSAGDDCAVAESVKAASDIYAPVSGEIVAVNDALSDSPELVNSEPYAGGWIFKIKASDESELESLLDATAYEALLEDE</sequence>
<organism>
    <name type="scientific">Salmonella typhi</name>
    <dbReference type="NCBI Taxonomy" id="90370"/>
    <lineage>
        <taxon>Bacteria</taxon>
        <taxon>Pseudomonadati</taxon>
        <taxon>Pseudomonadota</taxon>
        <taxon>Gammaproteobacteria</taxon>
        <taxon>Enterobacterales</taxon>
        <taxon>Enterobacteriaceae</taxon>
        <taxon>Salmonella</taxon>
    </lineage>
</organism>